<reference key="1">
    <citation type="journal article" date="1982" name="Proc. Natl. Acad. Sci. U.S.A.">
        <title>The two yeast histone H2A genes encode similar protein subtypes.</title>
        <authorList>
            <person name="Choe J."/>
            <person name="Kolodrubetz D."/>
            <person name="Grunstein M."/>
        </authorList>
    </citation>
    <scope>NUCLEOTIDE SEQUENCE [GENOMIC DNA]</scope>
</reference>
<reference key="2">
    <citation type="journal article" date="1995" name="Nucleic Acids Res.">
        <title>Insertion site specificity of the transposon Tn3.</title>
        <authorList>
            <person name="Davies C.J."/>
            <person name="Hutchison C.A. III"/>
        </authorList>
    </citation>
    <scope>NUCLEOTIDE SEQUENCE [GENOMIC DNA]</scope>
</reference>
<reference key="3">
    <citation type="journal article" date="1997" name="Nature">
        <title>The nucleotide sequence of Saccharomyces cerevisiae chromosome IV.</title>
        <authorList>
            <person name="Jacq C."/>
            <person name="Alt-Moerbe J."/>
            <person name="Andre B."/>
            <person name="Arnold W."/>
            <person name="Bahr A."/>
            <person name="Ballesta J.P.G."/>
            <person name="Bargues M."/>
            <person name="Baron L."/>
            <person name="Becker A."/>
            <person name="Biteau N."/>
            <person name="Bloecker H."/>
            <person name="Blugeon C."/>
            <person name="Boskovic J."/>
            <person name="Brandt P."/>
            <person name="Brueckner M."/>
            <person name="Buitrago M.J."/>
            <person name="Coster F."/>
            <person name="Delaveau T."/>
            <person name="del Rey F."/>
            <person name="Dujon B."/>
            <person name="Eide L.G."/>
            <person name="Garcia-Cantalejo J.M."/>
            <person name="Goffeau A."/>
            <person name="Gomez-Peris A."/>
            <person name="Granotier C."/>
            <person name="Hanemann V."/>
            <person name="Hankeln T."/>
            <person name="Hoheisel J.D."/>
            <person name="Jaeger W."/>
            <person name="Jimenez A."/>
            <person name="Jonniaux J.-L."/>
            <person name="Kraemer C."/>
            <person name="Kuester H."/>
            <person name="Laamanen P."/>
            <person name="Legros Y."/>
            <person name="Louis E.J."/>
            <person name="Moeller-Rieker S."/>
            <person name="Monnet A."/>
            <person name="Moro M."/>
            <person name="Mueller-Auer S."/>
            <person name="Nussbaumer B."/>
            <person name="Paricio N."/>
            <person name="Paulin L."/>
            <person name="Perea J."/>
            <person name="Perez-Alonso M."/>
            <person name="Perez-Ortin J.E."/>
            <person name="Pohl T.M."/>
            <person name="Prydz H."/>
            <person name="Purnelle B."/>
            <person name="Rasmussen S.W."/>
            <person name="Remacha M.A."/>
            <person name="Revuelta J.L."/>
            <person name="Rieger M."/>
            <person name="Salom D."/>
            <person name="Saluz H.P."/>
            <person name="Saiz J.E."/>
            <person name="Saren A.-M."/>
            <person name="Schaefer M."/>
            <person name="Scharfe M."/>
            <person name="Schmidt E.R."/>
            <person name="Schneider C."/>
            <person name="Scholler P."/>
            <person name="Schwarz S."/>
            <person name="Soler-Mira A."/>
            <person name="Urrestarazu L.A."/>
            <person name="Verhasselt P."/>
            <person name="Vissers S."/>
            <person name="Voet M."/>
            <person name="Volckaert G."/>
            <person name="Wagner G."/>
            <person name="Wambutt R."/>
            <person name="Wedler E."/>
            <person name="Wedler H."/>
            <person name="Woelfl S."/>
            <person name="Harris D.E."/>
            <person name="Bowman S."/>
            <person name="Brown D."/>
            <person name="Churcher C.M."/>
            <person name="Connor R."/>
            <person name="Dedman K."/>
            <person name="Gentles S."/>
            <person name="Hamlin N."/>
            <person name="Hunt S."/>
            <person name="Jones L."/>
            <person name="McDonald S."/>
            <person name="Murphy L.D."/>
            <person name="Niblett D."/>
            <person name="Odell C."/>
            <person name="Oliver K."/>
            <person name="Rajandream M.A."/>
            <person name="Richards C."/>
            <person name="Shore L."/>
            <person name="Walsh S.V."/>
            <person name="Barrell B.G."/>
            <person name="Dietrich F.S."/>
            <person name="Mulligan J.T."/>
            <person name="Allen E."/>
            <person name="Araujo R."/>
            <person name="Aviles E."/>
            <person name="Berno A."/>
            <person name="Carpenter J."/>
            <person name="Chen E."/>
            <person name="Cherry J.M."/>
            <person name="Chung E."/>
            <person name="Duncan M."/>
            <person name="Hunicke-Smith S."/>
            <person name="Hyman R.W."/>
            <person name="Komp C."/>
            <person name="Lashkari D."/>
            <person name="Lew H."/>
            <person name="Lin D."/>
            <person name="Mosedale D."/>
            <person name="Nakahara K."/>
            <person name="Namath A."/>
            <person name="Oefner P."/>
            <person name="Oh C."/>
            <person name="Petel F.X."/>
            <person name="Roberts D."/>
            <person name="Schramm S."/>
            <person name="Schroeder M."/>
            <person name="Shogren T."/>
            <person name="Shroff N."/>
            <person name="Winant A."/>
            <person name="Yelton M.A."/>
            <person name="Botstein D."/>
            <person name="Davis R.W."/>
            <person name="Johnston M."/>
            <person name="Andrews S."/>
            <person name="Brinkman R."/>
            <person name="Cooper J."/>
            <person name="Ding H."/>
            <person name="Du Z."/>
            <person name="Favello A."/>
            <person name="Fulton L."/>
            <person name="Gattung S."/>
            <person name="Greco T."/>
            <person name="Hallsworth K."/>
            <person name="Hawkins J."/>
            <person name="Hillier L.W."/>
            <person name="Jier M."/>
            <person name="Johnson D."/>
            <person name="Johnston L."/>
            <person name="Kirsten J."/>
            <person name="Kucaba T."/>
            <person name="Langston Y."/>
            <person name="Latreille P."/>
            <person name="Le T."/>
            <person name="Mardis E."/>
            <person name="Menezes S."/>
            <person name="Miller N."/>
            <person name="Nhan M."/>
            <person name="Pauley A."/>
            <person name="Peluso D."/>
            <person name="Rifkin L."/>
            <person name="Riles L."/>
            <person name="Taich A."/>
            <person name="Trevaskis E."/>
            <person name="Vignati D."/>
            <person name="Wilcox L."/>
            <person name="Wohldman P."/>
            <person name="Vaudin M."/>
            <person name="Wilson R."/>
            <person name="Waterston R."/>
            <person name="Albermann K."/>
            <person name="Hani J."/>
            <person name="Heumann K."/>
            <person name="Kleine K."/>
            <person name="Mewes H.-W."/>
            <person name="Zollner A."/>
            <person name="Zaccaria P."/>
        </authorList>
    </citation>
    <scope>NUCLEOTIDE SEQUENCE [LARGE SCALE GENOMIC DNA]</scope>
    <source>
        <strain>ATCC 204508 / S288c</strain>
    </source>
</reference>
<reference key="4">
    <citation type="journal article" date="2014" name="G3 (Bethesda)">
        <title>The reference genome sequence of Saccharomyces cerevisiae: Then and now.</title>
        <authorList>
            <person name="Engel S.R."/>
            <person name="Dietrich F.S."/>
            <person name="Fisk D.G."/>
            <person name="Binkley G."/>
            <person name="Balakrishnan R."/>
            <person name="Costanzo M.C."/>
            <person name="Dwight S.S."/>
            <person name="Hitz B.C."/>
            <person name="Karra K."/>
            <person name="Nash R.S."/>
            <person name="Weng S."/>
            <person name="Wong E.D."/>
            <person name="Lloyd P."/>
            <person name="Skrzypek M.S."/>
            <person name="Miyasato S.R."/>
            <person name="Simison M."/>
            <person name="Cherry J.M."/>
        </authorList>
    </citation>
    <scope>GENOME REANNOTATION</scope>
    <source>
        <strain>ATCC 204508 / S288c</strain>
    </source>
</reference>
<reference key="5">
    <citation type="journal article" date="1988" name="J. Biol. Chem.">
        <title>Analysis and in vivo disruption of the gene coding for adenylate kinase (ADK1) in the yeast Saccharomyces cerevisiae.</title>
        <authorList>
            <person name="Konrad M."/>
        </authorList>
    </citation>
    <scope>NUCLEOTIDE SEQUENCE [GENOMIC DNA] OF 15-132</scope>
</reference>
<reference key="6">
    <citation type="journal article" date="1990" name="Mol. Cell. Biol.">
        <title>A conserved sequence in histone H2A which is a ubiquitination site in higher eucaryotes is not required for growth in Saccharomyces cerevisiae.</title>
        <authorList>
            <person name="Swerdlow P.S."/>
            <person name="Schuster T."/>
            <person name="Finley D."/>
        </authorList>
    </citation>
    <scope>LACK OF UBIQUITINATION</scope>
    <scope>MUTAGENESIS OF 120-LYS-LYS-121</scope>
</reference>
<reference key="7">
    <citation type="journal article" date="1999" name="Mol. Cell. Biol.">
        <title>Esa1p is an essential histone acetyltransferase required for cell cycle progression.</title>
        <authorList>
            <person name="Clarke A.S."/>
            <person name="Lowell J.E."/>
            <person name="Jacobson S.J."/>
            <person name="Pillus L."/>
        </authorList>
    </citation>
    <scope>ACETYLATION AT LYS-5 AND LYS-8</scope>
</reference>
<reference key="8">
    <citation type="journal article" date="2000" name="Nature">
        <title>A role for Saccharomyces cerevisiae histone H2A in DNA repair.</title>
        <authorList>
            <person name="Downs J.A."/>
            <person name="Lowndes N.F."/>
            <person name="Jackson S.P."/>
        </authorList>
    </citation>
    <scope>FUNCTION</scope>
    <scope>MUTAGENESIS OF SER-129</scope>
    <scope>PHOSPHORYLATION AT SER-129</scope>
</reference>
<reference key="9">
    <citation type="journal article" date="2000" name="Science">
        <title>Rad6-dependent ubiquitination of histone H2B in yeast.</title>
        <authorList>
            <person name="Robzyk K."/>
            <person name="Recht J."/>
            <person name="Osley M.A."/>
        </authorList>
    </citation>
    <scope>LACK OF UBIQUITINATION</scope>
    <scope>MUTAGENESIS OF 120-LYS-LYS-121; LYS-124 AND LYS-127</scope>
</reference>
<reference key="10">
    <citation type="journal article" date="2001" name="Mol. Cell">
        <title>Highly specific antibodies determine histone acetylation site usage in yeast heterochromatin and euchromatin.</title>
        <authorList>
            <person name="Suka N."/>
            <person name="Suka Y."/>
            <person name="Carmen A.A."/>
            <person name="Wu J."/>
            <person name="Grunstein M."/>
        </authorList>
    </citation>
    <scope>ACETYLATION AT LYS-8</scope>
</reference>
<reference key="11">
    <citation type="journal article" date="2003" name="J. Biol. Chem.">
        <title>An Nalpha-acetyltransferase responsible for acetylation of the N-terminal residues of histones H4 and H2A.</title>
        <authorList>
            <person name="Song O.-K."/>
            <person name="Wang X."/>
            <person name="Waterborg J.H."/>
            <person name="Sternglanz R."/>
        </authorList>
    </citation>
    <scope>ACETYLATION AT SER-2</scope>
</reference>
<reference key="12">
    <citation type="journal article" date="2004" name="Curr. Biol.">
        <title>Distribution and dynamics of chromatin modification induced by a defined DNA double-strand break.</title>
        <authorList>
            <person name="Shroff R."/>
            <person name="Arbel-Eden A."/>
            <person name="Pilch D.R."/>
            <person name="Ira G."/>
            <person name="Bonner W.M."/>
            <person name="Petrini J.H.J."/>
            <person name="Haber J.E."/>
            <person name="Lichten M."/>
        </authorList>
    </citation>
    <scope>FUNCTION</scope>
    <scope>PHOSPHORYLATION</scope>
</reference>
<reference key="13">
    <citation type="journal article" date="2004" name="Mol. Cell">
        <title>Binding of chromatin-modifying activities to phosphorylated histone H2A at DNA damage sites.</title>
        <authorList>
            <person name="Downs J.A."/>
            <person name="Allard S."/>
            <person name="Jobin-Robitaille O."/>
            <person name="Javaheri A."/>
            <person name="Auger A."/>
            <person name="Bouchard N."/>
            <person name="Kron S.J."/>
            <person name="Jackson S.P."/>
            <person name="Cote J."/>
        </authorList>
    </citation>
    <scope>INTERACTION WITH ARP4</scope>
</reference>
<reference key="14">
    <citation type="journal article" date="2004" name="Mol. Cell">
        <title>DNA damage response pathway uses histone modification to assemble a double-strand break-specific cohesin domain.</title>
        <authorList>
            <person name="Uenal E."/>
            <person name="Arbel-Eden A."/>
            <person name="Sattler U."/>
            <person name="Shroff R."/>
            <person name="Lichten M."/>
            <person name="Haber J.E."/>
            <person name="Koshland D."/>
        </authorList>
    </citation>
    <scope>FUNCTION</scope>
    <scope>PHOSPHORYLATION</scope>
</reference>
<reference key="15">
    <citation type="journal article" date="2005" name="Genetics">
        <title>Saccharomyces cerevisiae histone H2A Ser122 facilitates DNA repair.</title>
        <authorList>
            <person name="Harvey A.C."/>
            <person name="Jackson S.P."/>
            <person name="Downs J.A."/>
        </authorList>
    </citation>
    <scope>MUTAGENESIS OF SER-122</scope>
</reference>
<reference key="16">
    <citation type="journal article" date="2006" name="Genes Dev.">
        <title>Histone sumoylation is a negative regulator in Saccharomyces cerevisiae and shows dynamic interplay with positive-acting histone modifications.</title>
        <authorList>
            <person name="Nathan D."/>
            <person name="Ingvarsdottir K."/>
            <person name="Sterner D.E."/>
            <person name="Bylebyl G.R."/>
            <person name="Dokmanovic M."/>
            <person name="Dorsey J.A."/>
            <person name="Whelan K.A."/>
            <person name="Krsmanovic M."/>
            <person name="Lane W.S."/>
            <person name="Meluh P.B."/>
            <person name="Johnson E.S."/>
            <person name="Berger S.L."/>
        </authorList>
    </citation>
    <scope>SUMOYLATION AT LYS-127</scope>
</reference>
<reference key="17">
    <citation type="journal article" date="2006" name="Nature">
        <title>A phosphatase complex that dephosphorylates gamma-H2AX regulates DNA damage checkpoint recovery.</title>
        <authorList>
            <person name="Keogh M.-C."/>
            <person name="Kim J.-A."/>
            <person name="Downey M."/>
            <person name="Fillingham J."/>
            <person name="Chowdhury D."/>
            <person name="Harrison J.C."/>
            <person name="Onishi M."/>
            <person name="Datta N."/>
            <person name="Galicia S."/>
            <person name="Emili A."/>
            <person name="Lieberman J."/>
            <person name="Shen X."/>
            <person name="Buratowski S."/>
            <person name="Haber J.E."/>
            <person name="Durocher D."/>
            <person name="Greenblatt J.F."/>
            <person name="Krogan N.J."/>
        </authorList>
    </citation>
    <scope>FUNCTION</scope>
    <scope>DEPHOSPHORYLATION</scope>
</reference>
<reference key="18">
    <citation type="journal article" date="2009" name="Mol. Cell">
        <title>Two-color cell array screen reveals interdependent roles for histone chaperones and a chromatin boundary regulator in histone gene repression.</title>
        <authorList>
            <person name="Fillingham J."/>
            <person name="Kainth P."/>
            <person name="Lambert J.P."/>
            <person name="van Bakel H."/>
            <person name="Tsui K."/>
            <person name="Pena-Castillo L."/>
            <person name="Nislow C."/>
            <person name="Figeys D."/>
            <person name="Hughes T.R."/>
            <person name="Greenblatt J."/>
            <person name="Andrews B.J."/>
        </authorList>
    </citation>
    <scope>INDUCTION</scope>
</reference>
<reference key="19">
    <citation type="journal article" date="2011" name="Genes Dev.">
        <title>Restriction of histone gene transcription to S phase by phosphorylation of a chromatin boundary protein.</title>
        <authorList>
            <person name="Kurat C.F."/>
            <person name="Lambert J.P."/>
            <person name="van Dyk D."/>
            <person name="Tsui K."/>
            <person name="van Bakel H."/>
            <person name="Kaluarachchi S."/>
            <person name="Friesen H."/>
            <person name="Kainth P."/>
            <person name="Nislow C."/>
            <person name="Figeys D."/>
            <person name="Fillingham J."/>
            <person name="Andrews B.J."/>
        </authorList>
    </citation>
    <scope>INDUCTION</scope>
</reference>
<reference key="20">
    <citation type="journal article" date="2012" name="Mol. Cell. Proteomics">
        <title>Lysine succinylation and lysine malonylation in histones.</title>
        <authorList>
            <person name="Xie Z."/>
            <person name="Dai J."/>
            <person name="Dai L."/>
            <person name="Tan M."/>
            <person name="Cheng Z."/>
            <person name="Wu Y."/>
            <person name="Boeke J.D."/>
            <person name="Zhao Y."/>
        </authorList>
    </citation>
    <scope>SUCCINYLATION AT LYS-14 AND LYS-22</scope>
    <scope>MALONYLATION AT LYS-120</scope>
</reference>
<reference key="21">
    <citation type="journal article" date="2014" name="Nature">
        <title>Glutamine methylation in histone H2A is an RNA-polymerase-I-dedicated modification.</title>
        <authorList>
            <person name="Tessarz P."/>
            <person name="Santos-Rosa H."/>
            <person name="Robson S.C."/>
            <person name="Sylvestersen K.B."/>
            <person name="Nelson C.J."/>
            <person name="Nielsen M.L."/>
            <person name="Kouzarides T."/>
        </authorList>
    </citation>
    <scope>METHYLATION AT GLN-106</scope>
</reference>
<reference key="22">
    <citation type="journal article" date="2001" name="EMBO J.">
        <title>Structure of the yeast nucleosome core particle reveals fundamental changes in internucleosome interactions.</title>
        <authorList>
            <person name="White C.L."/>
            <person name="Suto R.K."/>
            <person name="Luger K."/>
        </authorList>
    </citation>
    <scope>X-RAY CRYSTALLOGRAPHY (3.1 ANGSTROMS)</scope>
</reference>
<gene>
    <name type="primary">HTA1</name>
    <name type="synonym">H2A1</name>
    <name type="synonym">SPT11</name>
    <name type="ordered locus">YDR225W</name>
    <name type="ORF">YD9934.10</name>
</gene>
<proteinExistence type="evidence at protein level"/>
<organism>
    <name type="scientific">Saccharomyces cerevisiae (strain ATCC 204508 / S288c)</name>
    <name type="common">Baker's yeast</name>
    <dbReference type="NCBI Taxonomy" id="559292"/>
    <lineage>
        <taxon>Eukaryota</taxon>
        <taxon>Fungi</taxon>
        <taxon>Dikarya</taxon>
        <taxon>Ascomycota</taxon>
        <taxon>Saccharomycotina</taxon>
        <taxon>Saccharomycetes</taxon>
        <taxon>Saccharomycetales</taxon>
        <taxon>Saccharomycetaceae</taxon>
        <taxon>Saccharomyces</taxon>
    </lineage>
</organism>
<protein>
    <recommendedName>
        <fullName>Histone H2A.1</fullName>
    </recommendedName>
</protein>
<sequence length="132" mass="13989">MSGGKGGKAGSAAKASQSRSAKAGLTFPVGRVHRLLRRGNYAQRIGSGAPVYLTAVLEYLAAEILELAGNAARDNKKTRIIPRHLQLAIRNDDELNKLLGNVTIAQGGVLPNIHQNLLPKKSAKATKASQEL</sequence>
<evidence type="ECO:0000269" key="1">
    <source>
    </source>
</evidence>
<evidence type="ECO:0000269" key="2">
    <source>
    </source>
</evidence>
<evidence type="ECO:0000269" key="3">
    <source>
    </source>
</evidence>
<evidence type="ECO:0000269" key="4">
    <source>
    </source>
</evidence>
<evidence type="ECO:0000269" key="5">
    <source>
    </source>
</evidence>
<evidence type="ECO:0000269" key="6">
    <source>
    </source>
</evidence>
<evidence type="ECO:0000269" key="7">
    <source>
    </source>
</evidence>
<evidence type="ECO:0000269" key="8">
    <source>
    </source>
</evidence>
<evidence type="ECO:0000269" key="9">
    <source>
    </source>
</evidence>
<evidence type="ECO:0000269" key="10">
    <source>
    </source>
</evidence>
<evidence type="ECO:0000269" key="11">
    <source>
    </source>
</evidence>
<evidence type="ECO:0000269" key="12">
    <source>
    </source>
</evidence>
<evidence type="ECO:0000269" key="13">
    <source>
    </source>
</evidence>
<evidence type="ECO:0000269" key="14">
    <source>
    </source>
</evidence>
<evidence type="ECO:0000269" key="15">
    <source>
    </source>
</evidence>
<evidence type="ECO:0000305" key="16"/>
<evidence type="ECO:0007829" key="17">
    <source>
        <dbReference type="PDB" id="1ID3"/>
    </source>
</evidence>
<evidence type="ECO:0007829" key="18">
    <source>
        <dbReference type="PDB" id="4WNN"/>
    </source>
</evidence>
<evidence type="ECO:0007829" key="19">
    <source>
        <dbReference type="PDB" id="7ON1"/>
    </source>
</evidence>
<comment type="function">
    <text evidence="3 6 7 9">Core component of nucleosome which plays a central role in DNA double strand break (DSB) repair. Nucleosomes wrap and compact DNA into chromatin, limiting DNA accessibility to the cellular machineries which require DNA as a template. Histones thereby play a central role in transcription regulation, DNA repair, DNA replication and chromosomal stability. DNA accessibility is regulated via a complex set of post-translational modifications of histones, also called histone code, and nucleosome remodeling.</text>
</comment>
<comment type="subunit">
    <text>The nucleosome is a histone octamer containing two molecules each of H2A, H2B, H3 and H4 assembled in one H3-H4 heterotetramer and two H2A-H2B heterodimers. The octamer wraps approximately 147 bp of DNA.</text>
</comment>
<comment type="interaction">
    <interactant intactId="EBI-8072">
        <id>P04911</id>
    </interactant>
    <interactant intactId="EBI-11850">
        <id>P25293</id>
        <label>NAP1</label>
    </interactant>
    <organismsDiffer>false</organismsDiffer>
    <experiments>3</experiments>
</comment>
<comment type="subcellular location">
    <subcellularLocation>
        <location>Nucleus</location>
    </subcellularLocation>
    <subcellularLocation>
        <location>Chromosome</location>
    </subcellularLocation>
</comment>
<comment type="induction">
    <text evidence="11 13">Transcribed during late G1 and S-phase, repressed in G2.</text>
</comment>
<comment type="domain">
    <text>The [ST]-Q motif constitutes a recognition sequence for kinases from the PI3/PI4-kinase family.</text>
</comment>
<comment type="PTM">
    <text evidence="3 6 7">Phosphorylated to form H2AS128ph (gamma-H2A) in response to DNA double-strand breaks (DSBs) generated by exogenous genotoxic agents and by stalled replication forks. Phosphorylation is dependent on the DNA damage checkpoint kinases MEC1/ATR and TEL1/ATM, spreads on either side of a detected DSB site and may mark the surrounding chromatin for recruitment of proteins required for DNA damage signaling and repair. Gamma-H2A interacts with ARP4, a shared component of the NuA4 histone acetyltransferase complex and the INO80 and SWR1 chromatin remodeling complexes, and serves to recruit first NuA4, mediating histone H4 acetylation, and subsequently the INO80/SWR1 complexes, facilitating DNA resection, to DSB sites. Gamma-H2A is required for sequestering cohesin around the break site, which is important for efficient post-replicative double-strand break repair by homologous recombination, holding the damaged chromatid close to its undamaged sister template. Gamma-H2A is removed from the DNA prior to the strand invasion-primer extension step of the repair process and subsequently dephosphorylated by PPH3, a component of the histone H2A phosphatase complex (HTP-C). Dephosphorylation is necessary for efficient recovery from the DNA damage checkpoint.</text>
</comment>
<comment type="PTM">
    <text>N-acetylated by NAT4.</text>
</comment>
<comment type="PTM">
    <text>Acetylated by ESA1, a component of the NuA4 histone acetyltransferase (HAT) complex, to form H2AK4ac and H2AK7ac.</text>
</comment>
<comment type="PTM">
    <text evidence="15">Glutamine methylation at Gln-106 (H2AQ105me) by NOP1 is specifically dedicated to polymerase I. It is present at 35S ribosomal DNA locus and impairs binding of the FACT complex (PubMed:24352239).</text>
</comment>
<comment type="PTM">
    <text evidence="10">Sumoylated to from H2AK126su. May lead to transcriptional repression.</text>
</comment>
<comment type="miscellaneous">
    <text>In contrast to vertebrates and insects, its C-terminus is not monoubiquitinated.</text>
</comment>
<comment type="similarity">
    <text evidence="16">Belongs to the histone H2A family.</text>
</comment>
<comment type="caution">
    <text evidence="16">To ensure consistency between histone entries, we follow the 'Brno' nomenclature for histone modifications, with positions referring to those used in the literature for the 'closest' model organism. Due to slight variations in histone sequences between organisms and to the presence of initiator methionine in UniProtKB/Swiss-Prot sequences, the actual positions of modified amino acids in the sequence generally differ. In this entry the following conventions are used: H2AK4ac = acetylated Lys-5; H2AK7ac = acetylated Lys-8; H2AK126su = sumoylated Lys-127; H2AS128ph = phosphorylated Ser-129.</text>
</comment>
<accession>P04911</accession>
<accession>D6VSK7</accession>
<keyword id="KW-0002">3D-structure</keyword>
<keyword id="KW-0007">Acetylation</keyword>
<keyword id="KW-0158">Chromosome</keyword>
<keyword id="KW-0227">DNA damage</keyword>
<keyword id="KW-0234">DNA repair</keyword>
<keyword id="KW-0238">DNA-binding</keyword>
<keyword id="KW-1017">Isopeptide bond</keyword>
<keyword id="KW-0488">Methylation</keyword>
<keyword id="KW-0544">Nucleosome core</keyword>
<keyword id="KW-0539">Nucleus</keyword>
<keyword id="KW-0597">Phosphoprotein</keyword>
<keyword id="KW-1185">Reference proteome</keyword>
<keyword id="KW-0832">Ubl conjugation</keyword>
<dbReference type="EMBL" id="V01304">
    <property type="protein sequence ID" value="CAA24611.1"/>
    <property type="molecule type" value="Genomic_DNA"/>
</dbReference>
<dbReference type="EMBL" id="U13239">
    <property type="protein sequence ID" value="AAC33142.1"/>
    <property type="molecule type" value="Genomic_DNA"/>
</dbReference>
<dbReference type="EMBL" id="Z48612">
    <property type="protein sequence ID" value="CAA88505.1"/>
    <property type="molecule type" value="Genomic_DNA"/>
</dbReference>
<dbReference type="EMBL" id="M18455">
    <property type="protein sequence ID" value="AAA66318.1"/>
    <property type="molecule type" value="Genomic_DNA"/>
</dbReference>
<dbReference type="EMBL" id="BK006938">
    <property type="protein sequence ID" value="DAA12067.1"/>
    <property type="molecule type" value="Genomic_DNA"/>
</dbReference>
<dbReference type="PIR" id="S05813">
    <property type="entry name" value="HSBYA1"/>
</dbReference>
<dbReference type="RefSeq" id="NP_010511.3">
    <property type="nucleotide sequence ID" value="NM_001180533.3"/>
</dbReference>
<dbReference type="PDB" id="1ID3">
    <property type="method" value="X-ray"/>
    <property type="resolution" value="3.10 A"/>
    <property type="chains" value="C/G=2-132"/>
</dbReference>
<dbReference type="PDB" id="3T7K">
    <property type="method" value="X-ray"/>
    <property type="resolution" value="2.03 A"/>
    <property type="chains" value="C/D=125-132"/>
</dbReference>
<dbReference type="PDB" id="4WNN">
    <property type="method" value="X-ray"/>
    <property type="resolution" value="1.80 A"/>
    <property type="chains" value="A/C/E/G=1-132"/>
</dbReference>
<dbReference type="PDB" id="5BT1">
    <property type="method" value="X-ray"/>
    <property type="resolution" value="2.62 A"/>
    <property type="chains" value="C=1-132"/>
</dbReference>
<dbReference type="PDB" id="6GEJ">
    <property type="method" value="EM"/>
    <property type="resolution" value="3.60 A"/>
    <property type="chains" value="E/F=1-132"/>
</dbReference>
<dbReference type="PDB" id="6GEN">
    <property type="method" value="EM"/>
    <property type="resolution" value="3.60 A"/>
    <property type="chains" value="E/F=1-132"/>
</dbReference>
<dbReference type="PDB" id="6QLD">
    <property type="method" value="EM"/>
    <property type="resolution" value="4.15 A"/>
    <property type="chains" value="g=17-121, i=17-118"/>
</dbReference>
<dbReference type="PDB" id="7DLX">
    <property type="method" value="X-ray"/>
    <property type="resolution" value="2.40 A"/>
    <property type="chains" value="A/B/C/D/E/F/G/H=2-113"/>
</dbReference>
<dbReference type="PDB" id="7K78">
    <property type="method" value="EM"/>
    <property type="resolution" value="3.10 A"/>
    <property type="chains" value="C/G=1-132"/>
</dbReference>
<dbReference type="PDB" id="7K7G">
    <property type="method" value="EM"/>
    <property type="resolution" value="4.20 A"/>
    <property type="chains" value="C/G=1-132"/>
</dbReference>
<dbReference type="PDB" id="7ON1">
    <property type="method" value="EM"/>
    <property type="resolution" value="3.35 A"/>
    <property type="chains" value="c/g=1-132"/>
</dbReference>
<dbReference type="PDB" id="7SSA">
    <property type="method" value="EM"/>
    <property type="resolution" value="3.20 A"/>
    <property type="chains" value="C/G=2-132"/>
</dbReference>
<dbReference type="PDB" id="8OW0">
    <property type="method" value="EM"/>
    <property type="resolution" value="3.40 A"/>
    <property type="chains" value="c/g=1-132"/>
</dbReference>
<dbReference type="PDB" id="8OW1">
    <property type="method" value="EM"/>
    <property type="resolution" value="3.70 A"/>
    <property type="chains" value="c/g=1-132"/>
</dbReference>
<dbReference type="PDB" id="8QYV">
    <property type="method" value="EM"/>
    <property type="resolution" value="3.50 A"/>
    <property type="chains" value="E=1-132"/>
</dbReference>
<dbReference type="PDB" id="8QZ0">
    <property type="method" value="EM"/>
    <property type="resolution" value="3.80 A"/>
    <property type="chains" value="E=1-132"/>
</dbReference>
<dbReference type="PDB" id="8XGC">
    <property type="method" value="EM"/>
    <property type="resolution" value="3.70 A"/>
    <property type="chains" value="P=1-132"/>
</dbReference>
<dbReference type="PDB" id="9B1E">
    <property type="method" value="EM"/>
    <property type="resolution" value="4.40 A"/>
    <property type="chains" value="Q/S=1-132"/>
</dbReference>
<dbReference type="PDB" id="9FBW">
    <property type="method" value="EM"/>
    <property type="resolution" value="4.40 A"/>
    <property type="chains" value="E=1-132"/>
</dbReference>
<dbReference type="PDBsum" id="1ID3"/>
<dbReference type="PDBsum" id="3T7K"/>
<dbReference type="PDBsum" id="4WNN"/>
<dbReference type="PDBsum" id="5BT1"/>
<dbReference type="PDBsum" id="6GEJ"/>
<dbReference type="PDBsum" id="6GEN"/>
<dbReference type="PDBsum" id="6QLD"/>
<dbReference type="PDBsum" id="7DLX"/>
<dbReference type="PDBsum" id="7K78"/>
<dbReference type="PDBsum" id="7K7G"/>
<dbReference type="PDBsum" id="7ON1"/>
<dbReference type="PDBsum" id="7SSA"/>
<dbReference type="PDBsum" id="8OW0"/>
<dbReference type="PDBsum" id="8OW1"/>
<dbReference type="PDBsum" id="8QYV"/>
<dbReference type="PDBsum" id="8QZ0"/>
<dbReference type="PDBsum" id="8XGC"/>
<dbReference type="PDBsum" id="9B1E"/>
<dbReference type="PDBsum" id="9FBW"/>
<dbReference type="EMDB" id="EMD-17226"/>
<dbReference type="EMDB" id="EMD-17227"/>
<dbReference type="EMDB" id="EMD-18764"/>
<dbReference type="EMDB" id="EMD-18769"/>
<dbReference type="EMDB" id="EMD-22696"/>
<dbReference type="EMDB" id="EMD-22698"/>
<dbReference type="EMDB" id="EMD-25406"/>
<dbReference type="EMDB" id="EMD-38317"/>
<dbReference type="EMDB" id="EMD-41839"/>
<dbReference type="EMDB" id="EMD-41851"/>
<dbReference type="EMDB" id="EMD-41852"/>
<dbReference type="EMDB" id="EMD-41853"/>
<dbReference type="EMDB" id="EMD-4395"/>
<dbReference type="EMDB" id="EMD-4396"/>
<dbReference type="EMDB" id="EMD-4579"/>
<dbReference type="EMDB" id="EMD-50297"/>
<dbReference type="SMR" id="P04911"/>
<dbReference type="BioGRID" id="32277">
    <property type="interactions" value="682"/>
</dbReference>
<dbReference type="ComplexPortal" id="CPX-1612">
    <property type="entry name" value="Nucleosome, variant HTA1-HTB1"/>
</dbReference>
<dbReference type="ComplexPortal" id="CPX-2566">
    <property type="entry name" value="Nucleosome, variant HTA1-HTB2"/>
</dbReference>
<dbReference type="DIP" id="DIP-419N"/>
<dbReference type="ELM" id="P04911"/>
<dbReference type="FunCoup" id="P04911">
    <property type="interactions" value="1019"/>
</dbReference>
<dbReference type="IntAct" id="P04911">
    <property type="interactions" value="54"/>
</dbReference>
<dbReference type="MINT" id="P04911"/>
<dbReference type="STRING" id="4932.YDR225W"/>
<dbReference type="iPTMnet" id="P04911"/>
<dbReference type="PaxDb" id="4932-YDR225W"/>
<dbReference type="PeptideAtlas" id="P04911"/>
<dbReference type="EnsemblFungi" id="YDR225W_mRNA">
    <property type="protein sequence ID" value="YDR225W"/>
    <property type="gene ID" value="YDR225W"/>
</dbReference>
<dbReference type="GeneID" id="851811"/>
<dbReference type="KEGG" id="sce:YDR225W"/>
<dbReference type="AGR" id="SGD:S000002633"/>
<dbReference type="SGD" id="S000002633">
    <property type="gene designation" value="HTA1"/>
</dbReference>
<dbReference type="VEuPathDB" id="FungiDB:YDR225W"/>
<dbReference type="eggNOG" id="KOG1756">
    <property type="taxonomic scope" value="Eukaryota"/>
</dbReference>
<dbReference type="GeneTree" id="ENSGT01020000230360"/>
<dbReference type="HOGENOM" id="CLU_062828_3_0_1"/>
<dbReference type="InParanoid" id="P04911"/>
<dbReference type="OMA" id="YWARRTA"/>
<dbReference type="OrthoDB" id="4067082at2759"/>
<dbReference type="BioCyc" id="YEAST:G3O-29805-MONOMER"/>
<dbReference type="Reactome" id="R-SCE-2299718">
    <property type="pathway name" value="Condensation of Prophase Chromosomes"/>
</dbReference>
<dbReference type="Reactome" id="R-SCE-2559580">
    <property type="pathway name" value="Oxidative Stress Induced Senescence"/>
</dbReference>
<dbReference type="Reactome" id="R-SCE-3214815">
    <property type="pathway name" value="HDACs deacetylate histones"/>
</dbReference>
<dbReference type="Reactome" id="R-SCE-3214858">
    <property type="pathway name" value="RMTs methylate histone arginines"/>
</dbReference>
<dbReference type="Reactome" id="R-SCE-427359">
    <property type="pathway name" value="SIRT1 negatively regulates rRNA expression"/>
</dbReference>
<dbReference type="Reactome" id="R-SCE-5625886">
    <property type="pathway name" value="Activated PKN1 stimulates transcription of AR (androgen receptor) regulated genes KLK2 and KLK3"/>
</dbReference>
<dbReference type="Reactome" id="R-SCE-5689880">
    <property type="pathway name" value="Ub-specific processing proteases"/>
</dbReference>
<dbReference type="Reactome" id="R-SCE-5693565">
    <property type="pathway name" value="Recruitment and ATM-mediated phosphorylation of repair and signaling proteins at DNA double strand breaks"/>
</dbReference>
<dbReference type="Reactome" id="R-SCE-68616">
    <property type="pathway name" value="Assembly of the ORC complex at the origin of replication"/>
</dbReference>
<dbReference type="Reactome" id="R-SCE-73772">
    <property type="pathway name" value="RNA Polymerase I Promoter Escape"/>
</dbReference>
<dbReference type="Reactome" id="R-SCE-9018519">
    <property type="pathway name" value="Estrogen-dependent gene expression"/>
</dbReference>
<dbReference type="BioGRID-ORCS" id="851811">
    <property type="hits" value="2 hits in 10 CRISPR screens"/>
</dbReference>
<dbReference type="EvolutionaryTrace" id="P04911"/>
<dbReference type="PRO" id="PR:P04911"/>
<dbReference type="Proteomes" id="UP000002311">
    <property type="component" value="Chromosome IV"/>
</dbReference>
<dbReference type="RNAct" id="P04911">
    <property type="molecule type" value="protein"/>
</dbReference>
<dbReference type="GO" id="GO:0000786">
    <property type="term" value="C:nucleosome"/>
    <property type="evidence" value="ECO:0000353"/>
    <property type="project" value="ComplexPortal"/>
</dbReference>
<dbReference type="GO" id="GO:0005634">
    <property type="term" value="C:nucleus"/>
    <property type="evidence" value="ECO:0000318"/>
    <property type="project" value="GO_Central"/>
</dbReference>
<dbReference type="GO" id="GO:0003677">
    <property type="term" value="F:DNA binding"/>
    <property type="evidence" value="ECO:0000304"/>
    <property type="project" value="SGD"/>
</dbReference>
<dbReference type="GO" id="GO:0046982">
    <property type="term" value="F:protein heterodimerization activity"/>
    <property type="evidence" value="ECO:0007669"/>
    <property type="project" value="InterPro"/>
</dbReference>
<dbReference type="GO" id="GO:0030527">
    <property type="term" value="F:structural constituent of chromatin"/>
    <property type="evidence" value="ECO:0000318"/>
    <property type="project" value="GO_Central"/>
</dbReference>
<dbReference type="GO" id="GO:0006325">
    <property type="term" value="P:chromatin organization"/>
    <property type="evidence" value="ECO:0000304"/>
    <property type="project" value="SGD"/>
</dbReference>
<dbReference type="GO" id="GO:0006281">
    <property type="term" value="P:DNA repair"/>
    <property type="evidence" value="ECO:0000315"/>
    <property type="project" value="SGD"/>
</dbReference>
<dbReference type="GO" id="GO:0031507">
    <property type="term" value="P:heterochromatin formation"/>
    <property type="evidence" value="ECO:0000318"/>
    <property type="project" value="GO_Central"/>
</dbReference>
<dbReference type="GO" id="GO:0000122">
    <property type="term" value="P:negative regulation of transcription by RNA polymerase II"/>
    <property type="evidence" value="ECO:0000315"/>
    <property type="project" value="SGD"/>
</dbReference>
<dbReference type="CDD" id="cd00074">
    <property type="entry name" value="HFD_H2A"/>
    <property type="match status" value="1"/>
</dbReference>
<dbReference type="FunFam" id="1.10.20.10:FF:000008">
    <property type="entry name" value="Histone H2A"/>
    <property type="match status" value="1"/>
</dbReference>
<dbReference type="Gene3D" id="1.10.20.10">
    <property type="entry name" value="Histone, subunit A"/>
    <property type="match status" value="1"/>
</dbReference>
<dbReference type="IDEAL" id="IID50063"/>
<dbReference type="InterPro" id="IPR009072">
    <property type="entry name" value="Histone-fold"/>
</dbReference>
<dbReference type="InterPro" id="IPR002119">
    <property type="entry name" value="Histone_H2A"/>
</dbReference>
<dbReference type="InterPro" id="IPR007125">
    <property type="entry name" value="Histone_H2A/H2B/H3"/>
</dbReference>
<dbReference type="InterPro" id="IPR032454">
    <property type="entry name" value="Histone_H2A_C"/>
</dbReference>
<dbReference type="InterPro" id="IPR032458">
    <property type="entry name" value="Histone_H2A_CS"/>
</dbReference>
<dbReference type="PANTHER" id="PTHR23430">
    <property type="entry name" value="HISTONE H2A"/>
    <property type="match status" value="1"/>
</dbReference>
<dbReference type="Pfam" id="PF00125">
    <property type="entry name" value="Histone"/>
    <property type="match status" value="1"/>
</dbReference>
<dbReference type="Pfam" id="PF16211">
    <property type="entry name" value="Histone_H2A_C"/>
    <property type="match status" value="1"/>
</dbReference>
<dbReference type="PRINTS" id="PR00620">
    <property type="entry name" value="HISTONEH2A"/>
</dbReference>
<dbReference type="SMART" id="SM00414">
    <property type="entry name" value="H2A"/>
    <property type="match status" value="1"/>
</dbReference>
<dbReference type="SUPFAM" id="SSF47113">
    <property type="entry name" value="Histone-fold"/>
    <property type="match status" value="1"/>
</dbReference>
<dbReference type="PROSITE" id="PS00046">
    <property type="entry name" value="HISTONE_H2A"/>
    <property type="match status" value="1"/>
</dbReference>
<feature type="initiator methionine" description="Removed" evidence="5">
    <location>
        <position position="1"/>
    </location>
</feature>
<feature type="chain" id="PRO_0000055326" description="Histone H2A.1">
    <location>
        <begin position="2"/>
        <end position="132"/>
    </location>
</feature>
<feature type="short sequence motif" description="[ST]-Q motif">
    <location>
        <begin position="129"/>
        <end position="130"/>
    </location>
</feature>
<feature type="site" description="Not ubiquitinated" evidence="2 12">
    <location>
        <position position="120"/>
    </location>
</feature>
<feature type="modified residue" description="N-acetylserine" evidence="5">
    <location>
        <position position="2"/>
    </location>
</feature>
<feature type="modified residue" description="N6-acetyllysine" evidence="1">
    <location>
        <position position="5"/>
    </location>
</feature>
<feature type="modified residue" description="N6-acetyllysine" evidence="1 4">
    <location>
        <position position="8"/>
    </location>
</feature>
<feature type="modified residue" description="N6-succinyllysine" evidence="14">
    <location>
        <position position="14"/>
    </location>
</feature>
<feature type="modified residue" description="N6-succinyllysine" evidence="14">
    <location>
        <position position="22"/>
    </location>
</feature>
<feature type="modified residue" description="N5-methylglutamine" evidence="15">
    <location>
        <position position="106"/>
    </location>
</feature>
<feature type="modified residue" description="N6-malonyllysine; alternate" evidence="14">
    <location>
        <position position="120"/>
    </location>
</feature>
<feature type="modified residue" description="Phosphoserine" evidence="3">
    <location>
        <position position="129"/>
    </location>
</feature>
<feature type="cross-link" description="Glycyl lysine isopeptide (Lys-Gly) (interchain with G-Cter in SUMO)">
    <location>
        <position position="127"/>
    </location>
</feature>
<feature type="mutagenesis site" description="No effect. No effect; when associated with R-124 and R-127." evidence="2 12">
    <original>KK</original>
    <variation>RR</variation>
    <location>
        <begin position="120"/>
        <end position="121"/>
    </location>
</feature>
<feature type="mutagenesis site" description="Causes hypersensitivity to DNA-damage-inducing agents and impairs sporulation." evidence="8">
    <original>S</original>
    <variation>A</variation>
    <variation>E</variation>
    <location>
        <position position="122"/>
    </location>
</feature>
<feature type="mutagenesis site" description="No effect; when associated with R-120; R-121 and R-127." evidence="2">
    <original>K</original>
    <variation>R</variation>
    <location>
        <position position="124"/>
    </location>
</feature>
<feature type="mutagenesis site" description="No effect; when associated with R-120; R-121 and R-124." evidence="2">
    <original>K</original>
    <variation>R</variation>
    <location>
        <position position="127"/>
    </location>
</feature>
<feature type="mutagenesis site" description="Causes hypersensitivity to DNA-damage-inducing agents." evidence="3">
    <original>S</original>
    <variation>A</variation>
    <location>
        <position position="129"/>
    </location>
</feature>
<feature type="mutagenesis site" description="No effect." evidence="3">
    <original>S</original>
    <variation>E</variation>
    <variation>T</variation>
    <location>
        <position position="129"/>
    </location>
</feature>
<feature type="helix" evidence="18">
    <location>
        <begin position="19"/>
        <end position="23"/>
    </location>
</feature>
<feature type="helix" evidence="18">
    <location>
        <begin position="29"/>
        <end position="38"/>
    </location>
</feature>
<feature type="strand" evidence="18">
    <location>
        <begin position="41"/>
        <end position="45"/>
    </location>
</feature>
<feature type="helix" evidence="18">
    <location>
        <begin position="48"/>
        <end position="74"/>
    </location>
</feature>
<feature type="strand" evidence="18">
    <location>
        <begin position="78"/>
        <end position="80"/>
    </location>
</feature>
<feature type="helix" evidence="18">
    <location>
        <begin position="82"/>
        <end position="90"/>
    </location>
</feature>
<feature type="helix" evidence="18">
    <location>
        <begin position="93"/>
        <end position="99"/>
    </location>
</feature>
<feature type="strand" evidence="17">
    <location>
        <begin position="102"/>
        <end position="104"/>
    </location>
</feature>
<feature type="turn" evidence="19">
    <location>
        <begin position="105"/>
        <end position="107"/>
    </location>
</feature>
<feature type="helix" evidence="17">
    <location>
        <begin position="115"/>
        <end position="117"/>
    </location>
</feature>
<name>H2A1_YEAST</name>